<comment type="catalytic activity">
    <reaction>
        <text>Release of any N-terminal amino acid, including proline, that is linked to proline, even from a dipeptide or tripeptide.</text>
        <dbReference type="EC" id="3.4.11.9"/>
    </reaction>
</comment>
<comment type="cofactor">
    <cofactor evidence="1">
        <name>Mn(2+)</name>
        <dbReference type="ChEBI" id="CHEBI:29035"/>
    </cofactor>
    <text evidence="1">Binds 2 manganese ions per subunit.</text>
</comment>
<comment type="subunit">
    <text evidence="1">Homotetramer.</text>
</comment>
<comment type="similarity">
    <text evidence="2">Belongs to the peptidase M24B family.</text>
</comment>
<organism>
    <name type="scientific">Haemophilus influenzae (strain ATCC 51907 / DSM 11121 / KW20 / Rd)</name>
    <dbReference type="NCBI Taxonomy" id="71421"/>
    <lineage>
        <taxon>Bacteria</taxon>
        <taxon>Pseudomonadati</taxon>
        <taxon>Pseudomonadota</taxon>
        <taxon>Gammaproteobacteria</taxon>
        <taxon>Pasteurellales</taxon>
        <taxon>Pasteurellaceae</taxon>
        <taxon>Haemophilus</taxon>
    </lineage>
</organism>
<dbReference type="EC" id="3.4.11.9"/>
<dbReference type="EMBL" id="L42023">
    <property type="protein sequence ID" value="AAC22475.1"/>
    <property type="molecule type" value="Genomic_DNA"/>
</dbReference>
<dbReference type="PIR" id="B64096">
    <property type="entry name" value="B64096"/>
</dbReference>
<dbReference type="RefSeq" id="NP_438976.1">
    <property type="nucleotide sequence ID" value="NC_000907.1"/>
</dbReference>
<dbReference type="SMR" id="P44881"/>
<dbReference type="STRING" id="71421.HI_0816"/>
<dbReference type="MEROPS" id="M24.004"/>
<dbReference type="EnsemblBacteria" id="AAC22475">
    <property type="protein sequence ID" value="AAC22475"/>
    <property type="gene ID" value="HI_0816"/>
</dbReference>
<dbReference type="KEGG" id="hin:HI_0816"/>
<dbReference type="PATRIC" id="fig|71421.8.peg.857"/>
<dbReference type="eggNOG" id="COG0006">
    <property type="taxonomic scope" value="Bacteria"/>
</dbReference>
<dbReference type="HOGENOM" id="CLU_017266_1_0_6"/>
<dbReference type="OrthoDB" id="9806388at2"/>
<dbReference type="PhylomeDB" id="P44881"/>
<dbReference type="BioCyc" id="HINF71421:G1GJ1-857-MONOMER"/>
<dbReference type="Proteomes" id="UP000000579">
    <property type="component" value="Chromosome"/>
</dbReference>
<dbReference type="GO" id="GO:0005829">
    <property type="term" value="C:cytosol"/>
    <property type="evidence" value="ECO:0000318"/>
    <property type="project" value="GO_Central"/>
</dbReference>
<dbReference type="GO" id="GO:0004177">
    <property type="term" value="F:aminopeptidase activity"/>
    <property type="evidence" value="ECO:0000318"/>
    <property type="project" value="GO_Central"/>
</dbReference>
<dbReference type="GO" id="GO:0030145">
    <property type="term" value="F:manganese ion binding"/>
    <property type="evidence" value="ECO:0007669"/>
    <property type="project" value="InterPro"/>
</dbReference>
<dbReference type="GO" id="GO:0070006">
    <property type="term" value="F:metalloaminopeptidase activity"/>
    <property type="evidence" value="ECO:0007669"/>
    <property type="project" value="InterPro"/>
</dbReference>
<dbReference type="GO" id="GO:0006508">
    <property type="term" value="P:proteolysis"/>
    <property type="evidence" value="ECO:0000318"/>
    <property type="project" value="GO_Central"/>
</dbReference>
<dbReference type="CDD" id="cd01087">
    <property type="entry name" value="Prolidase"/>
    <property type="match status" value="1"/>
</dbReference>
<dbReference type="FunFam" id="3.90.230.10:FF:000002">
    <property type="entry name" value="Xaa-Pro aminopeptidase 3"/>
    <property type="match status" value="1"/>
</dbReference>
<dbReference type="Gene3D" id="3.90.230.10">
    <property type="entry name" value="Creatinase/methionine aminopeptidase superfamily"/>
    <property type="match status" value="1"/>
</dbReference>
<dbReference type="Gene3D" id="3.40.350.10">
    <property type="entry name" value="Creatinase/prolidase N-terminal domain"/>
    <property type="match status" value="1"/>
</dbReference>
<dbReference type="InterPro" id="IPR007865">
    <property type="entry name" value="Aminopep_P_N"/>
</dbReference>
<dbReference type="InterPro" id="IPR029149">
    <property type="entry name" value="Creatin/AminoP/Spt16_N"/>
</dbReference>
<dbReference type="InterPro" id="IPR036005">
    <property type="entry name" value="Creatinase/aminopeptidase-like"/>
</dbReference>
<dbReference type="InterPro" id="IPR000994">
    <property type="entry name" value="Pept_M24"/>
</dbReference>
<dbReference type="InterPro" id="IPR001131">
    <property type="entry name" value="Peptidase_M24B_aminopep-P_CS"/>
</dbReference>
<dbReference type="InterPro" id="IPR052433">
    <property type="entry name" value="X-Pro_dipept-like"/>
</dbReference>
<dbReference type="NCBIfam" id="NF008131">
    <property type="entry name" value="PRK10879.1"/>
    <property type="match status" value="1"/>
</dbReference>
<dbReference type="PANTHER" id="PTHR43226">
    <property type="entry name" value="XAA-PRO AMINOPEPTIDASE 3"/>
    <property type="match status" value="1"/>
</dbReference>
<dbReference type="PANTHER" id="PTHR43226:SF4">
    <property type="entry name" value="XAA-PRO AMINOPEPTIDASE 3"/>
    <property type="match status" value="1"/>
</dbReference>
<dbReference type="Pfam" id="PF05195">
    <property type="entry name" value="AMP_N"/>
    <property type="match status" value="1"/>
</dbReference>
<dbReference type="Pfam" id="PF00557">
    <property type="entry name" value="Peptidase_M24"/>
    <property type="match status" value="1"/>
</dbReference>
<dbReference type="SMART" id="SM01011">
    <property type="entry name" value="AMP_N"/>
    <property type="match status" value="1"/>
</dbReference>
<dbReference type="SUPFAM" id="SSF55920">
    <property type="entry name" value="Creatinase/aminopeptidase"/>
    <property type="match status" value="1"/>
</dbReference>
<dbReference type="SUPFAM" id="SSF53092">
    <property type="entry name" value="Creatinase/prolidase N-terminal domain"/>
    <property type="match status" value="1"/>
</dbReference>
<dbReference type="PROSITE" id="PS00491">
    <property type="entry name" value="PROLINE_PEPTIDASE"/>
    <property type="match status" value="1"/>
</dbReference>
<gene>
    <name type="primary">pepP</name>
    <name type="ordered locus">HI_0816</name>
</gene>
<feature type="chain" id="PRO_0000185076" description="Xaa-Pro aminopeptidase">
    <location>
        <begin position="1"/>
        <end position="430"/>
    </location>
</feature>
<feature type="binding site" evidence="1">
    <location>
        <position position="254"/>
    </location>
    <ligand>
        <name>Mn(2+)</name>
        <dbReference type="ChEBI" id="CHEBI:29035"/>
        <label>2</label>
    </ligand>
</feature>
<feature type="binding site" evidence="1">
    <location>
        <position position="265"/>
    </location>
    <ligand>
        <name>Mn(2+)</name>
        <dbReference type="ChEBI" id="CHEBI:29035"/>
        <label>1</label>
    </ligand>
</feature>
<feature type="binding site" evidence="1">
    <location>
        <position position="265"/>
    </location>
    <ligand>
        <name>Mn(2+)</name>
        <dbReference type="ChEBI" id="CHEBI:29035"/>
        <label>2</label>
    </ligand>
</feature>
<feature type="binding site" evidence="1">
    <location>
        <position position="348"/>
    </location>
    <ligand>
        <name>Mn(2+)</name>
        <dbReference type="ChEBI" id="CHEBI:29035"/>
        <label>1</label>
    </ligand>
</feature>
<feature type="binding site" evidence="1">
    <location>
        <position position="377"/>
    </location>
    <ligand>
        <name>Mn(2+)</name>
        <dbReference type="ChEBI" id="CHEBI:29035"/>
        <label>1</label>
    </ligand>
</feature>
<feature type="binding site" evidence="1">
    <location>
        <position position="400"/>
    </location>
    <ligand>
        <name>Mn(2+)</name>
        <dbReference type="ChEBI" id="CHEBI:29035"/>
        <label>1</label>
    </ligand>
</feature>
<feature type="binding site" evidence="1">
    <location>
        <position position="400"/>
    </location>
    <ligand>
        <name>Mn(2+)</name>
        <dbReference type="ChEBI" id="CHEBI:29035"/>
        <label>2</label>
    </ligand>
</feature>
<keyword id="KW-0031">Aminopeptidase</keyword>
<keyword id="KW-0378">Hydrolase</keyword>
<keyword id="KW-0464">Manganese</keyword>
<keyword id="KW-0479">Metal-binding</keyword>
<keyword id="KW-0482">Metalloprotease</keyword>
<keyword id="KW-0645">Protease</keyword>
<keyword id="KW-1185">Reference proteome</keyword>
<evidence type="ECO:0000250" key="1"/>
<evidence type="ECO:0000305" key="2"/>
<protein>
    <recommendedName>
        <fullName>Xaa-Pro aminopeptidase</fullName>
        <ecNumber>3.4.11.9</ecNumber>
    </recommendedName>
    <alternativeName>
        <fullName>Aminoacylproline aminopeptidase</fullName>
    </alternativeName>
    <alternativeName>
        <fullName>Aminopeptidase P II</fullName>
        <shortName>APP-II</shortName>
    </alternativeName>
    <alternativeName>
        <fullName>X-Pro aminopeptidase</fullName>
    </alternativeName>
</protein>
<sequence length="430" mass="49261">MELAYMAKLPKEEFEERRTRVFAQMQPNSALLLFSEIEKRRNNDCTYPFRQDSYFWYLTGFNEPNAALLLLKTEQVEKAIIFLRPRDPLLETWNGRRLGVERAPQQLNVNEAYSIEEFATVLPKILKNLTALYHVPEIHTWGDTLVSESAVNFSEILDWRPMLSEMRLIKSPNEIRLMQQAGQITALGHIKAMQTTRPNRFEYEIESDILHEFNRHCARFPSYNSIVAGGSNACILHYTENDRPLNDGDLVLIDAGCEFAMYAGDITRTFPVNGKFSQPQREIYELVLKAQKRAIELLVPGNSIKQANDEVIRIKTQGLVDLGILKGDVDTLIEQQAYRQFYMHGLGHWLGLDVHDVGSYGQDKQRILEIGMVITVEPGIYISEDADVPEQYKGIGVRIEDNLLMTEYGNKILTAAVPKEIADIENLMNF</sequence>
<name>AMPP_HAEIN</name>
<proteinExistence type="inferred from homology"/>
<reference key="1">
    <citation type="journal article" date="1995" name="Science">
        <title>Whole-genome random sequencing and assembly of Haemophilus influenzae Rd.</title>
        <authorList>
            <person name="Fleischmann R.D."/>
            <person name="Adams M.D."/>
            <person name="White O."/>
            <person name="Clayton R.A."/>
            <person name="Kirkness E.F."/>
            <person name="Kerlavage A.R."/>
            <person name="Bult C.J."/>
            <person name="Tomb J.-F."/>
            <person name="Dougherty B.A."/>
            <person name="Merrick J.M."/>
            <person name="McKenney K."/>
            <person name="Sutton G.G."/>
            <person name="FitzHugh W."/>
            <person name="Fields C.A."/>
            <person name="Gocayne J.D."/>
            <person name="Scott J.D."/>
            <person name="Shirley R."/>
            <person name="Liu L.-I."/>
            <person name="Glodek A."/>
            <person name="Kelley J.M."/>
            <person name="Weidman J.F."/>
            <person name="Phillips C.A."/>
            <person name="Spriggs T."/>
            <person name="Hedblom E."/>
            <person name="Cotton M.D."/>
            <person name="Utterback T.R."/>
            <person name="Hanna M.C."/>
            <person name="Nguyen D.T."/>
            <person name="Saudek D.M."/>
            <person name="Brandon R.C."/>
            <person name="Fine L.D."/>
            <person name="Fritchman J.L."/>
            <person name="Fuhrmann J.L."/>
            <person name="Geoghagen N.S.M."/>
            <person name="Gnehm C.L."/>
            <person name="McDonald L.A."/>
            <person name="Small K.V."/>
            <person name="Fraser C.M."/>
            <person name="Smith H.O."/>
            <person name="Venter J.C."/>
        </authorList>
    </citation>
    <scope>NUCLEOTIDE SEQUENCE [LARGE SCALE GENOMIC DNA]</scope>
    <source>
        <strain>ATCC 51907 / DSM 11121 / KW20 / Rd</strain>
    </source>
</reference>
<accession>P44881</accession>